<dbReference type="EMBL" id="AF083071">
    <property type="protein sequence ID" value="AAC62688.1"/>
    <property type="molecule type" value="Genomic_DNA"/>
</dbReference>
<dbReference type="EMBL" id="DP000238">
    <property type="protein sequence ID" value="ABK77802.1"/>
    <property type="molecule type" value="Genomic_DNA"/>
</dbReference>
<dbReference type="SMR" id="O74045"/>
<dbReference type="STRING" id="414004.CENSYa_1178"/>
<dbReference type="EnsemblBacteria" id="ABK77802">
    <property type="protein sequence ID" value="ABK77802"/>
    <property type="gene ID" value="CENSYa_1178"/>
</dbReference>
<dbReference type="KEGG" id="csy:CENSYa_1178"/>
<dbReference type="HOGENOM" id="CLU_060161_4_3_2"/>
<dbReference type="Proteomes" id="UP000000758">
    <property type="component" value="Chromosome"/>
</dbReference>
<dbReference type="GO" id="GO:0003677">
    <property type="term" value="F:DNA binding"/>
    <property type="evidence" value="ECO:0007669"/>
    <property type="project" value="UniProtKB-KW"/>
</dbReference>
<dbReference type="GO" id="GO:0003700">
    <property type="term" value="F:DNA-binding transcription factor activity"/>
    <property type="evidence" value="ECO:0007669"/>
    <property type="project" value="UniProtKB-UniRule"/>
</dbReference>
<dbReference type="GO" id="GO:0006352">
    <property type="term" value="P:DNA-templated transcription initiation"/>
    <property type="evidence" value="ECO:0007669"/>
    <property type="project" value="InterPro"/>
</dbReference>
<dbReference type="CDD" id="cd04518">
    <property type="entry name" value="TBP_archaea"/>
    <property type="match status" value="1"/>
</dbReference>
<dbReference type="Gene3D" id="3.30.310.10">
    <property type="entry name" value="TATA-Binding Protein"/>
    <property type="match status" value="2"/>
</dbReference>
<dbReference type="HAMAP" id="MF_00408">
    <property type="entry name" value="TATA_bind_prot_arch"/>
    <property type="match status" value="1"/>
</dbReference>
<dbReference type="InterPro" id="IPR000814">
    <property type="entry name" value="TBP"/>
</dbReference>
<dbReference type="InterPro" id="IPR033711">
    <property type="entry name" value="TBP_archaea"/>
</dbReference>
<dbReference type="InterPro" id="IPR012295">
    <property type="entry name" value="TBP_dom_sf"/>
</dbReference>
<dbReference type="PANTHER" id="PTHR10126">
    <property type="entry name" value="TATA-BOX BINDING PROTEIN"/>
    <property type="match status" value="1"/>
</dbReference>
<dbReference type="Pfam" id="PF00352">
    <property type="entry name" value="TBP"/>
    <property type="match status" value="2"/>
</dbReference>
<dbReference type="PRINTS" id="PR00686">
    <property type="entry name" value="TIFACTORIID"/>
</dbReference>
<dbReference type="SUPFAM" id="SSF55945">
    <property type="entry name" value="TATA-box binding protein-like"/>
    <property type="match status" value="2"/>
</dbReference>
<comment type="function">
    <text evidence="1">General factor that plays a role in the activation of archaeal genes transcribed by RNA polymerase. Binds specifically to the TATA box promoter element which lies close to the position of transcription initiation (By similarity).</text>
</comment>
<comment type="similarity">
    <text evidence="2">Belongs to the TBP family.</text>
</comment>
<evidence type="ECO:0000250" key="1"/>
<evidence type="ECO:0000305" key="2"/>
<proteinExistence type="inferred from homology"/>
<organism>
    <name type="scientific">Cenarchaeum symbiosum (strain A)</name>
    <dbReference type="NCBI Taxonomy" id="414004"/>
    <lineage>
        <taxon>Archaea</taxon>
        <taxon>Nitrososphaerota</taxon>
        <taxon>Candidatus Cenarchaeales</taxon>
        <taxon>Candidatus Cenarchaeaceae</taxon>
        <taxon>Candidatus Cenarchaeum</taxon>
    </lineage>
</organism>
<accession>O74045</accession>
<accession>A0RWT5</accession>
<feature type="chain" id="PRO_0000153999" description="TATA-box-binding protein">
    <location>
        <begin position="1"/>
        <end position="182"/>
    </location>
</feature>
<feature type="repeat" description="1">
    <location>
        <begin position="10"/>
        <end position="87"/>
    </location>
</feature>
<feature type="repeat" description="2">
    <location>
        <begin position="102"/>
        <end position="177"/>
    </location>
</feature>
<keyword id="KW-0238">DNA-binding</keyword>
<keyword id="KW-1185">Reference proteome</keyword>
<keyword id="KW-0677">Repeat</keyword>
<keyword id="KW-0804">Transcription</keyword>
<keyword id="KW-0805">Transcription regulation</keyword>
<protein>
    <recommendedName>
        <fullName>TATA-box-binding protein</fullName>
    </recommendedName>
    <alternativeName>
        <fullName>Box A-binding protein</fullName>
        <shortName>BAP</shortName>
    </alternativeName>
    <alternativeName>
        <fullName>TATA sequence-binding protein</fullName>
        <shortName>TBP</shortName>
    </alternativeName>
    <alternativeName>
        <fullName>TATA-box factor</fullName>
    </alternativeName>
</protein>
<name>TBP_CENSY</name>
<sequence>MLDPRTRPRVVNVVSTSDLVQRVSAKKMAAMPCCMYDEAVYGGRCGYIKTPGMQGRVTVFISGKMISVGARSVRASFGQLHEARLHLVRNGAAGDCKIRPVVRNIVATVDAGRNVPIDRISSRMPGAVYDPGSFPGMILKGLDSCSFLVFASGKMVIAGAKSPDELRRSSFDLLTRLNNAGA</sequence>
<reference key="1">
    <citation type="journal article" date="1998" name="J. Bacteriol.">
        <title>Genomic analysis reveals chromosomal variation in natural populations of the uncultured psychrophilic archaeon Cenarchaeum symbiosum.</title>
        <authorList>
            <person name="Schleper C."/>
            <person name="Delong E.F."/>
            <person name="Preston C.M."/>
            <person name="Feldman R.A."/>
            <person name="Wu K.-Y."/>
            <person name="Swanson R.V."/>
        </authorList>
    </citation>
    <scope>NUCLEOTIDE SEQUENCE [GENOMIC DNA]</scope>
    <source>
        <strain>A</strain>
    </source>
</reference>
<reference key="2">
    <citation type="journal article" date="2006" name="Proc. Natl. Acad. Sci. U.S.A.">
        <title>Genomic analysis of the uncultivated marine crenarchaeote Cenarchaeum symbiosum.</title>
        <authorList>
            <person name="Hallam S.J."/>
            <person name="Konstantinidis K.T."/>
            <person name="Putnam N."/>
            <person name="Schleper C."/>
            <person name="Watanabe Y."/>
            <person name="Sugahara J."/>
            <person name="Preston C."/>
            <person name="de la Torre J."/>
            <person name="Richardson P.M."/>
            <person name="DeLong E.F."/>
        </authorList>
    </citation>
    <scope>NUCLEOTIDE SEQUENCE [LARGE SCALE GENOMIC DNA]</scope>
    <source>
        <strain>A</strain>
    </source>
</reference>
<gene>
    <name type="primary">tbp</name>
    <name type="synonym">TF2D</name>
    <name type="ordered locus">CENSYa_1178</name>
</gene>